<comment type="subcellular location">
    <subcellularLocation>
        <location evidence="2">Cell membrane</location>
        <topology evidence="2">Lipid-anchor</topology>
    </subcellularLocation>
</comment>
<dbReference type="EMBL" id="U00096">
    <property type="protein sequence ID" value="AAC75435.1"/>
    <property type="molecule type" value="Genomic_DNA"/>
</dbReference>
<dbReference type="EMBL" id="AP009048">
    <property type="protein sequence ID" value="BAE76706.1"/>
    <property type="molecule type" value="Genomic_DNA"/>
</dbReference>
<dbReference type="PIR" id="E65011">
    <property type="entry name" value="E65011"/>
</dbReference>
<dbReference type="RefSeq" id="NP_416877.1">
    <property type="nucleotide sequence ID" value="NC_000913.3"/>
</dbReference>
<dbReference type="RefSeq" id="WP_000867631.1">
    <property type="nucleotide sequence ID" value="NZ_LN832404.1"/>
</dbReference>
<dbReference type="BioGRID" id="4260896">
    <property type="interactions" value="258"/>
</dbReference>
<dbReference type="DIP" id="DIP-12820N"/>
<dbReference type="FunCoup" id="O32528">
    <property type="interactions" value="94"/>
</dbReference>
<dbReference type="IntAct" id="O32528">
    <property type="interactions" value="1"/>
</dbReference>
<dbReference type="STRING" id="511145.b2376"/>
<dbReference type="PaxDb" id="511145-b2376"/>
<dbReference type="EnsemblBacteria" id="AAC75435">
    <property type="protein sequence ID" value="AAC75435"/>
    <property type="gene ID" value="b2376"/>
</dbReference>
<dbReference type="GeneID" id="949107"/>
<dbReference type="KEGG" id="ecj:JW2373"/>
<dbReference type="KEGG" id="eco:b2376"/>
<dbReference type="KEGG" id="ecoc:C3026_13210"/>
<dbReference type="PATRIC" id="fig|1411691.4.peg.4353"/>
<dbReference type="EchoBASE" id="EB4119"/>
<dbReference type="HOGENOM" id="CLU_2422485_0_0_6"/>
<dbReference type="InParanoid" id="O32528"/>
<dbReference type="OMA" id="TEKTSMM"/>
<dbReference type="BioCyc" id="EcoCyc:G7239-MONOMER"/>
<dbReference type="PRO" id="PR:O32528"/>
<dbReference type="Proteomes" id="UP000000625">
    <property type="component" value="Chromosome"/>
</dbReference>
<dbReference type="GO" id="GO:0005886">
    <property type="term" value="C:plasma membrane"/>
    <property type="evidence" value="ECO:0007669"/>
    <property type="project" value="UniProtKB-SubCell"/>
</dbReference>
<dbReference type="GO" id="GO:0009242">
    <property type="term" value="P:colanic acid biosynthetic process"/>
    <property type="evidence" value="ECO:0000315"/>
    <property type="project" value="EcoCyc"/>
</dbReference>
<dbReference type="PROSITE" id="PS51257">
    <property type="entry name" value="PROKAR_LIPOPROTEIN"/>
    <property type="match status" value="1"/>
</dbReference>
<protein>
    <recommendedName>
        <fullName>Uncharacterized lipoprotein YpdI</fullName>
    </recommendedName>
</protein>
<accession>O32528</accession>
<accession>Q2MAK0</accession>
<reference key="1">
    <citation type="journal article" date="1997" name="Science">
        <title>The complete genome sequence of Escherichia coli K-12.</title>
        <authorList>
            <person name="Blattner F.R."/>
            <person name="Plunkett G. III"/>
            <person name="Bloch C.A."/>
            <person name="Perna N.T."/>
            <person name="Burland V."/>
            <person name="Riley M."/>
            <person name="Collado-Vides J."/>
            <person name="Glasner J.D."/>
            <person name="Rode C.K."/>
            <person name="Mayhew G.F."/>
            <person name="Gregor J."/>
            <person name="Davis N.W."/>
            <person name="Kirkpatrick H.A."/>
            <person name="Goeden M.A."/>
            <person name="Rose D.J."/>
            <person name="Mau B."/>
            <person name="Shao Y."/>
        </authorList>
    </citation>
    <scope>NUCLEOTIDE SEQUENCE [LARGE SCALE GENOMIC DNA]</scope>
    <source>
        <strain>K12 / MG1655 / ATCC 47076</strain>
    </source>
</reference>
<reference key="2">
    <citation type="journal article" date="2006" name="Mol. Syst. Biol.">
        <title>Highly accurate genome sequences of Escherichia coli K-12 strains MG1655 and W3110.</title>
        <authorList>
            <person name="Hayashi K."/>
            <person name="Morooka N."/>
            <person name="Yamamoto Y."/>
            <person name="Fujita K."/>
            <person name="Isono K."/>
            <person name="Choi S."/>
            <person name="Ohtsubo E."/>
            <person name="Baba T."/>
            <person name="Wanner B.L."/>
            <person name="Mori H."/>
            <person name="Horiuchi T."/>
        </authorList>
    </citation>
    <scope>NUCLEOTIDE SEQUENCE [LARGE SCALE GENOMIC DNA]</scope>
    <source>
        <strain>K12 / W3110 / ATCC 27325 / DSM 5911</strain>
    </source>
</reference>
<organism>
    <name type="scientific">Escherichia coli (strain K12)</name>
    <dbReference type="NCBI Taxonomy" id="83333"/>
    <lineage>
        <taxon>Bacteria</taxon>
        <taxon>Pseudomonadati</taxon>
        <taxon>Pseudomonadota</taxon>
        <taxon>Gammaproteobacteria</taxon>
        <taxon>Enterobacterales</taxon>
        <taxon>Enterobacteriaceae</taxon>
        <taxon>Escherichia</taxon>
    </lineage>
</organism>
<gene>
    <name type="primary">ypdI</name>
    <name type="ordered locus">b2376</name>
    <name type="ordered locus">JW2373</name>
</gene>
<feature type="signal peptide" evidence="1">
    <location>
        <begin position="1"/>
        <end position="18"/>
    </location>
</feature>
<feature type="chain" id="PRO_0000018059" description="Uncharacterized lipoprotein YpdI">
    <location>
        <begin position="19"/>
        <end position="91"/>
    </location>
</feature>
<feature type="lipid moiety-binding region" description="N-palmitoyl cysteine" evidence="1">
    <location>
        <position position="19"/>
    </location>
</feature>
<feature type="lipid moiety-binding region" description="S-diacylglycerol cysteine" evidence="1">
    <location>
        <position position="19"/>
    </location>
</feature>
<evidence type="ECO:0000255" key="1">
    <source>
        <dbReference type="PROSITE-ProRule" id="PRU00303"/>
    </source>
</evidence>
<evidence type="ECO:0000305" key="2"/>
<sequence length="91" mass="10162">MKVNLILFSLFLLVSIMACNVFAFSISGGGSERSYKETEKTSAMTTTHSTKLQPSQAILFKMREDAPPLNLTEEMPPPFPTKANYLIHPVR</sequence>
<name>YPDI_ECOLI</name>
<proteinExistence type="inferred from homology"/>
<keyword id="KW-1003">Cell membrane</keyword>
<keyword id="KW-0449">Lipoprotein</keyword>
<keyword id="KW-0472">Membrane</keyword>
<keyword id="KW-0564">Palmitate</keyword>
<keyword id="KW-1185">Reference proteome</keyword>
<keyword id="KW-0732">Signal</keyword>